<protein>
    <recommendedName>
        <fullName evidence="1">Porphobilinogen deaminase</fullName>
        <shortName evidence="1">PBG</shortName>
        <ecNumber evidence="1">2.5.1.61</ecNumber>
    </recommendedName>
    <alternativeName>
        <fullName evidence="1">Hydroxymethylbilane synthase</fullName>
        <shortName evidence="1">HMBS</shortName>
    </alternativeName>
    <alternativeName>
        <fullName evidence="1">Pre-uroporphyrinogen synthase</fullName>
    </alternativeName>
</protein>
<feature type="chain" id="PRO_0000304224" description="Porphobilinogen deaminase">
    <location>
        <begin position="1"/>
        <end position="307"/>
    </location>
</feature>
<feature type="modified residue" description="S-(dipyrrolylmethanemethyl)cysteine" evidence="1">
    <location>
        <position position="239"/>
    </location>
</feature>
<organism>
    <name type="scientific">Campylobacter jejuni subsp. jejuni serotype O:23/36 (strain 81-176)</name>
    <dbReference type="NCBI Taxonomy" id="354242"/>
    <lineage>
        <taxon>Bacteria</taxon>
        <taxon>Pseudomonadati</taxon>
        <taxon>Campylobacterota</taxon>
        <taxon>Epsilonproteobacteria</taxon>
        <taxon>Campylobacterales</taxon>
        <taxon>Campylobacteraceae</taxon>
        <taxon>Campylobacter</taxon>
    </lineage>
</organism>
<accession>A1VYQ4</accession>
<keyword id="KW-0627">Porphyrin biosynthesis</keyword>
<keyword id="KW-0808">Transferase</keyword>
<proteinExistence type="inferred from homology"/>
<comment type="function">
    <text evidence="1">Tetrapolymerization of the monopyrrole PBG into the hydroxymethylbilane pre-uroporphyrinogen in several discrete steps.</text>
</comment>
<comment type="catalytic activity">
    <reaction evidence="1">
        <text>4 porphobilinogen + H2O = hydroxymethylbilane + 4 NH4(+)</text>
        <dbReference type="Rhea" id="RHEA:13185"/>
        <dbReference type="ChEBI" id="CHEBI:15377"/>
        <dbReference type="ChEBI" id="CHEBI:28938"/>
        <dbReference type="ChEBI" id="CHEBI:57845"/>
        <dbReference type="ChEBI" id="CHEBI:58126"/>
        <dbReference type="EC" id="2.5.1.61"/>
    </reaction>
</comment>
<comment type="cofactor">
    <cofactor evidence="1">
        <name>dipyrromethane</name>
        <dbReference type="ChEBI" id="CHEBI:60342"/>
    </cofactor>
    <text evidence="1">Binds 1 dipyrromethane group covalently.</text>
</comment>
<comment type="pathway">
    <text evidence="1">Porphyrin-containing compound metabolism; protoporphyrin-IX biosynthesis; coproporphyrinogen-III from 5-aminolevulinate: step 2/4.</text>
</comment>
<comment type="subunit">
    <text evidence="1">Monomer.</text>
</comment>
<comment type="miscellaneous">
    <text evidence="1">The porphobilinogen subunits are added to the dipyrromethane group.</text>
</comment>
<comment type="similarity">
    <text evidence="1">Belongs to the HMBS family.</text>
</comment>
<reference key="1">
    <citation type="submission" date="2006-12" db="EMBL/GenBank/DDBJ databases">
        <authorList>
            <person name="Fouts D.E."/>
            <person name="Nelson K.E."/>
            <person name="Sebastian Y."/>
        </authorList>
    </citation>
    <scope>NUCLEOTIDE SEQUENCE [LARGE SCALE GENOMIC DNA]</scope>
    <source>
        <strain>81-176</strain>
    </source>
</reference>
<gene>
    <name evidence="1" type="primary">hemC</name>
    <name type="ordered locus">CJJ81176_0570</name>
</gene>
<dbReference type="EC" id="2.5.1.61" evidence="1"/>
<dbReference type="EMBL" id="CP000538">
    <property type="protein sequence ID" value="EAQ72963.1"/>
    <property type="molecule type" value="Genomic_DNA"/>
</dbReference>
<dbReference type="RefSeq" id="WP_002820769.1">
    <property type="nucleotide sequence ID" value="NC_008787.1"/>
</dbReference>
<dbReference type="SMR" id="A1VYQ4"/>
<dbReference type="KEGG" id="cjj:CJJ81176_0570"/>
<dbReference type="eggNOG" id="COG0181">
    <property type="taxonomic scope" value="Bacteria"/>
</dbReference>
<dbReference type="HOGENOM" id="CLU_019704_1_0_7"/>
<dbReference type="UniPathway" id="UPA00251">
    <property type="reaction ID" value="UER00319"/>
</dbReference>
<dbReference type="Proteomes" id="UP000000646">
    <property type="component" value="Chromosome"/>
</dbReference>
<dbReference type="GO" id="GO:0005737">
    <property type="term" value="C:cytoplasm"/>
    <property type="evidence" value="ECO:0007669"/>
    <property type="project" value="TreeGrafter"/>
</dbReference>
<dbReference type="GO" id="GO:0004418">
    <property type="term" value="F:hydroxymethylbilane synthase activity"/>
    <property type="evidence" value="ECO:0007669"/>
    <property type="project" value="UniProtKB-UniRule"/>
</dbReference>
<dbReference type="GO" id="GO:0006782">
    <property type="term" value="P:protoporphyrinogen IX biosynthetic process"/>
    <property type="evidence" value="ECO:0007669"/>
    <property type="project" value="UniProtKB-UniRule"/>
</dbReference>
<dbReference type="CDD" id="cd13646">
    <property type="entry name" value="PBP2_EcHMBS_like"/>
    <property type="match status" value="1"/>
</dbReference>
<dbReference type="FunFam" id="3.40.190.10:FF:000004">
    <property type="entry name" value="Porphobilinogen deaminase"/>
    <property type="match status" value="1"/>
</dbReference>
<dbReference type="FunFam" id="3.40.190.10:FF:000005">
    <property type="entry name" value="Porphobilinogen deaminase"/>
    <property type="match status" value="1"/>
</dbReference>
<dbReference type="Gene3D" id="3.40.190.10">
    <property type="entry name" value="Periplasmic binding protein-like II"/>
    <property type="match status" value="2"/>
</dbReference>
<dbReference type="Gene3D" id="3.30.160.40">
    <property type="entry name" value="Porphobilinogen deaminase, C-terminal domain"/>
    <property type="match status" value="1"/>
</dbReference>
<dbReference type="HAMAP" id="MF_00260">
    <property type="entry name" value="Porphobil_deam"/>
    <property type="match status" value="1"/>
</dbReference>
<dbReference type="InterPro" id="IPR000860">
    <property type="entry name" value="HemC"/>
</dbReference>
<dbReference type="InterPro" id="IPR022419">
    <property type="entry name" value="Porphobilin_deaminase_cofac_BS"/>
</dbReference>
<dbReference type="InterPro" id="IPR022417">
    <property type="entry name" value="Porphobilin_deaminase_N"/>
</dbReference>
<dbReference type="InterPro" id="IPR022418">
    <property type="entry name" value="Porphobilinogen_deaminase_C"/>
</dbReference>
<dbReference type="InterPro" id="IPR036803">
    <property type="entry name" value="Porphobilinogen_deaminase_C_sf"/>
</dbReference>
<dbReference type="NCBIfam" id="TIGR00212">
    <property type="entry name" value="hemC"/>
    <property type="match status" value="1"/>
</dbReference>
<dbReference type="PANTHER" id="PTHR11557">
    <property type="entry name" value="PORPHOBILINOGEN DEAMINASE"/>
    <property type="match status" value="1"/>
</dbReference>
<dbReference type="PANTHER" id="PTHR11557:SF0">
    <property type="entry name" value="PORPHOBILINOGEN DEAMINASE"/>
    <property type="match status" value="1"/>
</dbReference>
<dbReference type="Pfam" id="PF01379">
    <property type="entry name" value="Porphobil_deam"/>
    <property type="match status" value="1"/>
</dbReference>
<dbReference type="Pfam" id="PF03900">
    <property type="entry name" value="Porphobil_deamC"/>
    <property type="match status" value="1"/>
</dbReference>
<dbReference type="PIRSF" id="PIRSF001438">
    <property type="entry name" value="4pyrrol_synth_OHMeBilane_synth"/>
    <property type="match status" value="1"/>
</dbReference>
<dbReference type="PRINTS" id="PR00151">
    <property type="entry name" value="PORPHBDMNASE"/>
</dbReference>
<dbReference type="SUPFAM" id="SSF53850">
    <property type="entry name" value="Periplasmic binding protein-like II"/>
    <property type="match status" value="1"/>
</dbReference>
<dbReference type="SUPFAM" id="SSF54782">
    <property type="entry name" value="Porphobilinogen deaminase (hydroxymethylbilane synthase), C-terminal domain"/>
    <property type="match status" value="1"/>
</dbReference>
<dbReference type="PROSITE" id="PS00533">
    <property type="entry name" value="PORPHOBILINOGEN_DEAM"/>
    <property type="match status" value="1"/>
</dbReference>
<sequence length="307" mass="34037">MKLIIATRKSQLALWQSEHVAQILKNTHQIEVLLEGFKTKGDVLLDSPLAKIGGKGLFTKELEESMLRKEAHLAVHSLKDVPSFFPQGLVLAAVSKREQSNDAMLSQNYKDFLSLPKGAKIGTTSLRRKMQLLLLRPDLDIISLRGNVNSRIEKLKNNDFDAIILAMAGIKRLNLDKQVNFVYEFSKDELIPAASQGALGIESINDEKILELLKCLNDENALIETSIEREFIATLEGGCQVPIGINAELLGDEICVRAVLGLPDGSEILKDKRMIKKNDFKGFGESLAKEFIAKGAKELLKKAESMI</sequence>
<name>HEM3_CAMJJ</name>
<evidence type="ECO:0000255" key="1">
    <source>
        <dbReference type="HAMAP-Rule" id="MF_00260"/>
    </source>
</evidence>